<gene>
    <name type="primary">KRTAP19-7</name>
    <name type="synonym">KAP19.7</name>
</gene>
<feature type="chain" id="PRO_0000223909" description="Keratin-associated protein 19-7">
    <location>
        <begin position="1"/>
        <end position="63"/>
    </location>
</feature>
<comment type="function">
    <text>In the hair cortex, hair keratin intermediate filaments are embedded in an interfilamentous matrix, consisting of hair keratin-associated proteins (KRTAP), which are essential for the formation of a rigid and resistant hair shaft through their extensive disulfide bond cross-linking with abundant cysteine residues of hair keratins. The matrix proteins include the high-sulfur and high-glycine-tyrosine keratins.</text>
</comment>
<comment type="subunit">
    <text evidence="1">Interacts with hair keratins.</text>
</comment>
<comment type="interaction">
    <interactant intactId="EBI-10241353">
        <id>Q3SYF9</id>
    </interactant>
    <interactant intactId="EBI-11954519">
        <id>Q49AR9</id>
        <label>ANKS1A</label>
    </interactant>
    <organismsDiffer>false</organismsDiffer>
    <experiments>3</experiments>
</comment>
<comment type="interaction">
    <interactant intactId="EBI-10241353">
        <id>Q3SYF9</id>
    </interactant>
    <interactant intactId="EBI-948603">
        <id>Q03989</id>
        <label>ARID5A</label>
    </interactant>
    <organismsDiffer>false</organismsDiffer>
    <experiments>3</experiments>
</comment>
<comment type="interaction">
    <interactant intactId="EBI-10241353">
        <id>Q3SYF9</id>
    </interactant>
    <interactant intactId="EBI-742909">
        <id>Q9H6L4</id>
        <label>ARMC7</label>
    </interactant>
    <organismsDiffer>false</organismsDiffer>
    <experiments>3</experiments>
</comment>
<comment type="interaction">
    <interactant intactId="EBI-10241353">
        <id>Q3SYF9</id>
    </interactant>
    <interactant intactId="EBI-11954292">
        <id>Q86V38</id>
        <label>ATN1</label>
    </interactant>
    <organismsDiffer>false</organismsDiffer>
    <experiments>3</experiments>
</comment>
<comment type="interaction">
    <interactant intactId="EBI-10241353">
        <id>Q3SYF9</id>
    </interactant>
    <interactant intactId="EBI-1166928">
        <id>Q8N5M1</id>
        <label>ATPAF2</label>
    </interactant>
    <organismsDiffer>false</organismsDiffer>
    <experiments>3</experiments>
</comment>
<comment type="interaction">
    <interactant intactId="EBI-10241353">
        <id>Q3SYF9</id>
    </interactant>
    <interactant intactId="EBI-8624731">
        <id>P0C7T5</id>
        <label>ATXN1L</label>
    </interactant>
    <organismsDiffer>false</organismsDiffer>
    <experiments>3</experiments>
</comment>
<comment type="interaction">
    <interactant intactId="EBI-10241353">
        <id>Q3SYF9</id>
    </interactant>
    <interactant intactId="EBI-742750">
        <id>Q8TBE0</id>
        <label>BAHD1</label>
    </interactant>
    <organismsDiffer>false</organismsDiffer>
    <experiments>3</experiments>
</comment>
<comment type="interaction">
    <interactant intactId="EBI-10241353">
        <id>Q3SYF9</id>
    </interactant>
    <interactant intactId="EBI-711810">
        <id>O14503</id>
        <label>BHLHE40</label>
    </interactant>
    <organismsDiffer>false</organismsDiffer>
    <experiments>3</experiments>
</comment>
<comment type="interaction">
    <interactant intactId="EBI-10241353">
        <id>Q3SYF9</id>
    </interactant>
    <interactant intactId="EBI-1383687">
        <id>Q9UQM7</id>
        <label>CAMK2A</label>
    </interactant>
    <organismsDiffer>false</organismsDiffer>
    <experiments>3</experiments>
</comment>
<comment type="interaction">
    <interactant intactId="EBI-10241353">
        <id>Q3SYF9</id>
    </interactant>
    <interactant intactId="EBI-1058722">
        <id>Q13554</id>
        <label>CAMK2B</label>
    </interactant>
    <organismsDiffer>false</organismsDiffer>
    <experiments>3</experiments>
</comment>
<comment type="interaction">
    <interactant intactId="EBI-10241353">
        <id>Q3SYF9</id>
    </interactant>
    <interactant intactId="EBI-744545">
        <id>Q8NEC5</id>
        <label>CATSPER1</label>
    </interactant>
    <organismsDiffer>false</organismsDiffer>
    <experiments>3</experiments>
</comment>
<comment type="interaction">
    <interactant intactId="EBI-10241353">
        <id>Q3SYF9</id>
    </interactant>
    <interactant intactId="EBI-1104933">
        <id>Q8N4L8</id>
        <label>CCDC24</label>
    </interactant>
    <organismsDiffer>false</organismsDiffer>
    <experiments>3</experiments>
</comment>
<comment type="interaction">
    <interactant intactId="EBI-10241353">
        <id>Q3SYF9</id>
    </interactant>
    <interactant intactId="EBI-12010594">
        <id>O75909-2</id>
        <label>CCNK</label>
    </interactant>
    <organismsDiffer>false</organismsDiffer>
    <experiments>3</experiments>
</comment>
<comment type="interaction">
    <interactant intactId="EBI-10241353">
        <id>Q3SYF9</id>
    </interactant>
    <interactant intactId="EBI-747133">
        <id>P27658</id>
        <label>COL8A1</label>
    </interactant>
    <organismsDiffer>false</organismsDiffer>
    <experiments>3</experiments>
</comment>
<comment type="interaction">
    <interactant intactId="EBI-10241353">
        <id>Q3SYF9</id>
    </interactant>
    <interactant intactId="EBI-6875961">
        <id>P02489</id>
        <label>CRYAA</label>
    </interactant>
    <organismsDiffer>false</organismsDiffer>
    <experiments>3</experiments>
</comment>
<comment type="interaction">
    <interactant intactId="EBI-10241353">
        <id>Q3SYF9</id>
    </interactant>
    <interactant intactId="EBI-3867333">
        <id>A8MQ03</id>
        <label>CYSRT1</label>
    </interactant>
    <organismsDiffer>false</organismsDiffer>
    <experiments>3</experiments>
</comment>
<comment type="interaction">
    <interactant intactId="EBI-10241353">
        <id>Q3SYF9</id>
    </interactant>
    <interactant intactId="EBI-7875264">
        <id>O75553</id>
        <label>DAB1</label>
    </interactant>
    <organismsDiffer>false</organismsDiffer>
    <experiments>3</experiments>
</comment>
<comment type="interaction">
    <interactant intactId="EBI-10241353">
        <id>Q3SYF9</id>
    </interactant>
    <interactant intactId="EBI-724310">
        <id>Q15038</id>
        <label>DAZAP2</label>
    </interactant>
    <organismsDiffer>false</organismsDiffer>
    <experiments>3</experiments>
</comment>
<comment type="interaction">
    <interactant intactId="EBI-10241353">
        <id>Q3SYF9</id>
    </interactant>
    <interactant intactId="EBI-10968534">
        <id>P50570-2</id>
        <label>DNM2</label>
    </interactant>
    <organismsDiffer>false</organismsDiffer>
    <experiments>3</experiments>
</comment>
<comment type="interaction">
    <interactant intactId="EBI-10241353">
        <id>Q3SYF9</id>
    </interactant>
    <interactant intactId="EBI-740376">
        <id>Q86UW9</id>
        <label>DTX2</label>
    </interactant>
    <organismsDiffer>false</organismsDiffer>
    <experiments>3</experiments>
</comment>
<comment type="interaction">
    <interactant intactId="EBI-10241353">
        <id>Q3SYF9</id>
    </interactant>
    <interactant intactId="EBI-17280301">
        <id>Q03828</id>
        <label>EVX2</label>
    </interactant>
    <organismsDiffer>false</organismsDiffer>
    <experiments>3</experiments>
</comment>
<comment type="interaction">
    <interactant intactId="EBI-10241353">
        <id>Q3SYF9</id>
    </interactant>
    <interactant intactId="EBI-11978259">
        <id>Q92567-2</id>
        <label>FAM168A</label>
    </interactant>
    <organismsDiffer>false</organismsDiffer>
    <experiments>3</experiments>
</comment>
<comment type="interaction">
    <interactant intactId="EBI-10241353">
        <id>Q3SYF9</id>
    </interactant>
    <interactant intactId="EBI-348399">
        <id>P22607</id>
        <label>FGFR3</label>
    </interactant>
    <organismsDiffer>false</organismsDiffer>
    <experiments>3</experiments>
</comment>
<comment type="interaction">
    <interactant intactId="EBI-10241353">
        <id>Q3SYF9</id>
    </interactant>
    <interactant intactId="EBI-17282008">
        <id>O60548</id>
        <label>FOXD2</label>
    </interactant>
    <organismsDiffer>false</organismsDiffer>
    <experiments>3</experiments>
</comment>
<comment type="interaction">
    <interactant intactId="EBI-10241353">
        <id>Q3SYF9</id>
    </interactant>
    <interactant intactId="EBI-1759806">
        <id>O75593</id>
        <label>FOXH1</label>
    </interactant>
    <organismsDiffer>false</organismsDiffer>
    <experiments>3</experiments>
</comment>
<comment type="interaction">
    <interactant intactId="EBI-10241353">
        <id>Q3SYF9</id>
    </interactant>
    <interactant intactId="EBI-12018822">
        <id>Q12951-2</id>
        <label>FOXI1</label>
    </interactant>
    <organismsDiffer>false</organismsDiffer>
    <experiments>3</experiments>
</comment>
<comment type="interaction">
    <interactant intactId="EBI-10241353">
        <id>Q3SYF9</id>
    </interactant>
    <interactant intactId="EBI-7251368">
        <id>Q9BZE0</id>
        <label>GLIS2</label>
    </interactant>
    <organismsDiffer>false</organismsDiffer>
    <experiments>3</experiments>
</comment>
<comment type="interaction">
    <interactant intactId="EBI-10241353">
        <id>Q3SYF9</id>
    </interactant>
    <interactant intactId="EBI-11975289">
        <id>Q9Y223-2</id>
        <label>GNE</label>
    </interactant>
    <organismsDiffer>false</organismsDiffer>
    <experiments>3</experiments>
</comment>
<comment type="interaction">
    <interactant intactId="EBI-10241353">
        <id>Q3SYF9</id>
    </interactant>
    <interactant intactId="EBI-747754">
        <id>P28799</id>
        <label>GRN</label>
    </interactant>
    <organismsDiffer>false</organismsDiffer>
    <experiments>3</experiments>
</comment>
<comment type="interaction">
    <interactant intactId="EBI-10241353">
        <id>Q3SYF9</id>
    </interactant>
    <interactant intactId="EBI-351506">
        <id>P06396</id>
        <label>GSN</label>
    </interactant>
    <organismsDiffer>false</organismsDiffer>
    <experiments>3</experiments>
</comment>
<comment type="interaction">
    <interactant intactId="EBI-10241353">
        <id>Q3SYF9</id>
    </interactant>
    <interactant intactId="EBI-18011701">
        <id>Q9H4S2</id>
        <label>GSX1</label>
    </interactant>
    <organismsDiffer>false</organismsDiffer>
    <experiments>3</experiments>
</comment>
<comment type="interaction">
    <interactant intactId="EBI-10241353">
        <id>Q3SYF9</id>
    </interactant>
    <interactant intactId="EBI-748420">
        <id>Q9NSC5</id>
        <label>HOMER3</label>
    </interactant>
    <organismsDiffer>false</organismsDiffer>
    <experiments>3</experiments>
</comment>
<comment type="interaction">
    <interactant intactId="EBI-10241353">
        <id>Q3SYF9</id>
    </interactant>
    <interactant intactId="EBI-740785">
        <id>P49639</id>
        <label>HOXA1</label>
    </interactant>
    <organismsDiffer>false</organismsDiffer>
    <experiments>3</experiments>
</comment>
<comment type="interaction">
    <interactant intactId="EBI-10241353">
        <id>Q3SYF9</id>
    </interactant>
    <interactant intactId="EBI-12056251">
        <id>Q9ULV5-2</id>
        <label>HSF4</label>
    </interactant>
    <organismsDiffer>false</organismsDiffer>
    <experiments>3</experiments>
</comment>
<comment type="interaction">
    <interactant intactId="EBI-10241353">
        <id>Q3SYF9</id>
    </interactant>
    <interactant intactId="EBI-352682">
        <id>P04792</id>
        <label>HSPB1</label>
    </interactant>
    <organismsDiffer>false</organismsDiffer>
    <experiments>3</experiments>
</comment>
<comment type="interaction">
    <interactant intactId="EBI-10241353">
        <id>Q3SYF9</id>
    </interactant>
    <interactant intactId="EBI-12100506">
        <id>P78412</id>
        <label>IRX6</label>
    </interactant>
    <organismsDiffer>false</organismsDiffer>
    <experiments>3</experiments>
</comment>
<comment type="interaction">
    <interactant intactId="EBI-10241353">
        <id>Q3SYF9</id>
    </interactant>
    <interactant intactId="EBI-10975473">
        <id>O60333-2</id>
        <label>KIF1B</label>
    </interactant>
    <organismsDiffer>false</organismsDiffer>
    <experiments>3</experiments>
</comment>
<comment type="interaction">
    <interactant intactId="EBI-10241353">
        <id>Q3SYF9</id>
    </interactant>
    <interactant intactId="EBI-2432309">
        <id>Q92876</id>
        <label>KLK6</label>
    </interactant>
    <organismsDiffer>false</organismsDiffer>
    <experiments>3</experiments>
</comment>
<comment type="interaction">
    <interactant intactId="EBI-10241353">
        <id>Q3SYF9</id>
    </interactant>
    <interactant intactId="EBI-10981970">
        <id>Q5T749</id>
        <label>KPRP</label>
    </interactant>
    <organismsDiffer>false</organismsDiffer>
    <experiments>3</experiments>
</comment>
<comment type="interaction">
    <interactant intactId="EBI-10241353">
        <id>Q3SYF9</id>
    </interactant>
    <interactant intactId="EBI-1047093">
        <id>O76011</id>
        <label>KRT34</label>
    </interactant>
    <organismsDiffer>false</organismsDiffer>
    <experiments>3</experiments>
</comment>
<comment type="interaction">
    <interactant intactId="EBI-10241353">
        <id>Q3SYF9</id>
    </interactant>
    <interactant intactId="EBI-10171774">
        <id>P60410</id>
        <label>KRTAP10-8</label>
    </interactant>
    <organismsDiffer>false</organismsDiffer>
    <experiments>3</experiments>
</comment>
<comment type="interaction">
    <interactant intactId="EBI-10241353">
        <id>Q3SYF9</id>
    </interactant>
    <interactant intactId="EBI-11953334">
        <id>P60328</id>
        <label>KRTAP12-3</label>
    </interactant>
    <organismsDiffer>false</organismsDiffer>
    <experiments>3</experiments>
</comment>
<comment type="interaction">
    <interactant intactId="EBI-10241353">
        <id>Q3SYF9</id>
    </interactant>
    <interactant intactId="EBI-10176396">
        <id>P60329</id>
        <label>KRTAP12-4</label>
    </interactant>
    <organismsDiffer>false</organismsDiffer>
    <experiments>3</experiments>
</comment>
<comment type="interaction">
    <interactant intactId="EBI-10241353">
        <id>Q3SYF9</id>
    </interactant>
    <interactant intactId="EBI-3957672">
        <id>Q6PEX3</id>
        <label>KRTAP26-1</label>
    </interactant>
    <organismsDiffer>false</organismsDiffer>
    <experiments>3</experiments>
</comment>
<comment type="interaction">
    <interactant intactId="EBI-10241353">
        <id>Q3SYF9</id>
    </interactant>
    <interactant intactId="EBI-3957694">
        <id>Q9BYR6</id>
        <label>KRTAP3-3</label>
    </interactant>
    <organismsDiffer>false</organismsDiffer>
    <experiments>3</experiments>
</comment>
<comment type="interaction">
    <interactant intactId="EBI-10241353">
        <id>Q3SYF9</id>
    </interactant>
    <interactant intactId="EBI-22311199">
        <id>Q3LI67</id>
        <label>KRTAP6-3</label>
    </interactant>
    <organismsDiffer>false</organismsDiffer>
    <experiments>3</experiments>
</comment>
<comment type="interaction">
    <interactant intactId="EBI-10241353">
        <id>Q3SYF9</id>
    </interactant>
    <interactant intactId="EBI-1044640">
        <id>Q9BYQ4</id>
        <label>KRTAP9-2</label>
    </interactant>
    <organismsDiffer>false</organismsDiffer>
    <experiments>3</experiments>
</comment>
<comment type="interaction">
    <interactant intactId="EBI-10241353">
        <id>Q3SYF9</id>
    </interactant>
    <interactant intactId="EBI-2341787">
        <id>Q17RB8</id>
        <label>LONRF1</label>
    </interactant>
    <organismsDiffer>false</organismsDiffer>
    <experiments>3</experiments>
</comment>
<comment type="interaction">
    <interactant intactId="EBI-10241353">
        <id>Q3SYF9</id>
    </interactant>
    <interactant intactId="EBI-741424">
        <id>Q8NDC0</id>
        <label>MAPK1IP1L</label>
    </interactant>
    <organismsDiffer>false</organismsDiffer>
    <experiments>3</experiments>
</comment>
<comment type="interaction">
    <interactant intactId="EBI-10241353">
        <id>Q3SYF9</id>
    </interactant>
    <interactant intactId="EBI-2340269">
        <id>Q13064</id>
        <label>MKRN3</label>
    </interactant>
    <organismsDiffer>false</organismsDiffer>
    <experiments>3</experiments>
</comment>
<comment type="interaction">
    <interactant intactId="EBI-10241353">
        <id>Q3SYF9</id>
    </interactant>
    <interactant intactId="EBI-2515597">
        <id>Q96HR8</id>
        <label>NAF1</label>
    </interactant>
    <organismsDiffer>false</organismsDiffer>
    <experiments>3</experiments>
</comment>
<comment type="interaction">
    <interactant intactId="EBI-10241353">
        <id>Q3SYF9</id>
    </interactant>
    <interactant intactId="EBI-10277551">
        <id>Q8WWR8-2</id>
        <label>NEU4</label>
    </interactant>
    <organismsDiffer>false</organismsDiffer>
    <experiments>3</experiments>
</comment>
<comment type="interaction">
    <interactant intactId="EBI-10241353">
        <id>Q3SYF9</id>
    </interactant>
    <interactant intactId="EBI-17490746">
        <id>A8MTQ0</id>
        <label>NOTO</label>
    </interactant>
    <organismsDiffer>false</organismsDiffer>
    <experiments>3</experiments>
</comment>
<comment type="interaction">
    <interactant intactId="EBI-10241353">
        <id>Q3SYF9</id>
    </interactant>
    <interactant intactId="EBI-12025760">
        <id>Q86UR1-2</id>
        <label>NOXA1</label>
    </interactant>
    <organismsDiffer>false</organismsDiffer>
    <experiments>3</experiments>
</comment>
<comment type="interaction">
    <interactant intactId="EBI-10241353">
        <id>Q3SYF9</id>
    </interactant>
    <interactant intactId="EBI-740446">
        <id>P32242</id>
        <label>OTX1</label>
    </interactant>
    <organismsDiffer>false</organismsDiffer>
    <experiments>3</experiments>
</comment>
<comment type="interaction">
    <interactant intactId="EBI-10241353">
        <id>Q3SYF9</id>
    </interactant>
    <interactant intactId="EBI-11022007">
        <id>Q9HBE1-4</id>
        <label>PATZ1</label>
    </interactant>
    <organismsDiffer>false</organismsDiffer>
    <experiments>3</experiments>
</comment>
<comment type="interaction">
    <interactant intactId="EBI-10241353">
        <id>Q3SYF9</id>
    </interactant>
    <interactant intactId="EBI-12859446">
        <id>P23759-2</id>
        <label>PAX7</label>
    </interactant>
    <organismsDiffer>false</organismsDiffer>
    <experiments>3</experiments>
</comment>
<comment type="interaction">
    <interactant intactId="EBI-10241353">
        <id>Q3SYF9</id>
    </interactant>
    <interactant intactId="EBI-748265">
        <id>P78337</id>
        <label>PITX1</label>
    </interactant>
    <organismsDiffer>false</organismsDiffer>
    <experiments>3</experiments>
</comment>
<comment type="interaction">
    <interactant intactId="EBI-10241353">
        <id>Q3SYF9</id>
    </interactant>
    <interactant intactId="EBI-12138495">
        <id>Q99697-2</id>
        <label>PITX2</label>
    </interactant>
    <organismsDiffer>false</organismsDiffer>
    <experiments>3</experiments>
</comment>
<comment type="interaction">
    <interactant intactId="EBI-10241353">
        <id>Q3SYF9</id>
    </interactant>
    <interactant intactId="EBI-750734">
        <id>Q9NRY6</id>
        <label>PLSCR3</label>
    </interactant>
    <organismsDiffer>false</organismsDiffer>
    <experiments>3</experiments>
</comment>
<comment type="interaction">
    <interactant intactId="EBI-10241353">
        <id>Q3SYF9</id>
    </interactant>
    <interactant intactId="EBI-769257">
        <id>Q9NRQ2</id>
        <label>PLSCR4</label>
    </interactant>
    <organismsDiffer>false</organismsDiffer>
    <experiments>3</experiments>
</comment>
<comment type="interaction">
    <interactant intactId="EBI-10241353">
        <id>Q3SYF9</id>
    </interactant>
    <interactant intactId="EBI-943588">
        <id>Q16633</id>
        <label>POU2AF1</label>
    </interactant>
    <organismsDiffer>false</organismsDiffer>
    <experiments>3</experiments>
</comment>
<comment type="interaction">
    <interactant intactId="EBI-10241353">
        <id>Q3SYF9</id>
    </interactant>
    <interactant intactId="EBI-17236143">
        <id>Q12837</id>
        <label>POU4F2</label>
    </interactant>
    <organismsDiffer>false</organismsDiffer>
    <experiments>3</experiments>
</comment>
<comment type="interaction">
    <interactant intactId="EBI-10241353">
        <id>Q3SYF9</id>
    </interactant>
    <interactant intactId="EBI-9027467">
        <id>O75360</id>
        <label>PROP1</label>
    </interactant>
    <organismsDiffer>false</organismsDiffer>
    <experiments>3</experiments>
</comment>
<comment type="interaction">
    <interactant intactId="EBI-10241353">
        <id>Q3SYF9</id>
    </interactant>
    <interactant intactId="EBI-740924">
        <id>Q9NZ81</id>
        <label>PRR13</label>
    </interactant>
    <organismsDiffer>false</organismsDiffer>
    <experiments>3</experiments>
</comment>
<comment type="interaction">
    <interactant intactId="EBI-10241353">
        <id>Q3SYF9</id>
    </interactant>
    <interactant intactId="EBI-372273">
        <id>P20618</id>
        <label>PSMB1</label>
    </interactant>
    <organismsDiffer>false</organismsDiffer>
    <experiments>3</experiments>
</comment>
<comment type="interaction">
    <interactant intactId="EBI-10241353">
        <id>Q3SYF9</id>
    </interactant>
    <interactant intactId="EBI-359335">
        <id>P49721</id>
        <label>PSMB2</label>
    </interactant>
    <organismsDiffer>false</organismsDiffer>
    <experiments>3</experiments>
</comment>
<comment type="interaction">
    <interactant intactId="EBI-10241353">
        <id>Q3SYF9</id>
    </interactant>
    <interactant intactId="EBI-740322">
        <id>Q93062</id>
        <label>RBPMS</label>
    </interactant>
    <organismsDiffer>false</organismsDiffer>
    <experiments>3</experiments>
</comment>
<comment type="interaction">
    <interactant intactId="EBI-10241353">
        <id>Q3SYF9</id>
    </interactant>
    <interactant intactId="EBI-740343">
        <id>Q93062-3</id>
        <label>RBPMS</label>
    </interactant>
    <organismsDiffer>false</organismsDiffer>
    <experiments>6</experiments>
</comment>
<comment type="interaction">
    <interactant intactId="EBI-10241353">
        <id>Q3SYF9</id>
    </interactant>
    <interactant intactId="EBI-11987469">
        <id>Q6ZRY4</id>
        <label>RBPMS2</label>
    </interactant>
    <organismsDiffer>false</organismsDiffer>
    <experiments>3</experiments>
</comment>
<comment type="interaction">
    <interactant intactId="EBI-10241353">
        <id>Q3SYF9</id>
    </interactant>
    <interactant intactId="EBI-372094">
        <id>Q9BQY4</id>
        <label>RHOXF2</label>
    </interactant>
    <organismsDiffer>false</organismsDiffer>
    <experiments>6</experiments>
</comment>
<comment type="interaction">
    <interactant intactId="EBI-10241353">
        <id>Q3SYF9</id>
    </interactant>
    <interactant intactId="EBI-396669">
        <id>Q9Y3C5</id>
        <label>RNF11</label>
    </interactant>
    <organismsDiffer>false</organismsDiffer>
    <experiments>3</experiments>
</comment>
<comment type="interaction">
    <interactant intactId="EBI-10241353">
        <id>Q3SYF9</id>
    </interactant>
    <interactant intactId="EBI-2845060">
        <id>Q7L0R7</id>
        <label>RNF44</label>
    </interactant>
    <organismsDiffer>false</organismsDiffer>
    <experiments>3</experiments>
</comment>
<comment type="interaction">
    <interactant intactId="EBI-10241353">
        <id>Q3SYF9</id>
    </interactant>
    <interactant intactId="EBI-6422642">
        <id>Q01974</id>
        <label>ROR2</label>
    </interactant>
    <organismsDiffer>false</organismsDiffer>
    <experiments>3</experiments>
</comment>
<comment type="interaction">
    <interactant intactId="EBI-10241353">
        <id>Q3SYF9</id>
    </interactant>
    <interactant intactId="EBI-395421">
        <id>Q16637</id>
        <label>SMN2</label>
    </interactant>
    <organismsDiffer>false</organismsDiffer>
    <experiments>6</experiments>
</comment>
<comment type="interaction">
    <interactant intactId="EBI-10241353">
        <id>Q3SYF9</id>
    </interactant>
    <interactant intactId="EBI-11959123">
        <id>Q99932-2</id>
        <label>SPAG8</label>
    </interactant>
    <organismsDiffer>false</organismsDiffer>
    <experiments>3</experiments>
</comment>
<comment type="interaction">
    <interactant intactId="EBI-10241353">
        <id>Q3SYF9</id>
    </interactant>
    <interactant intactId="EBI-743976">
        <id>Q96LM6</id>
        <label>SPMIP9</label>
    </interactant>
    <organismsDiffer>false</organismsDiffer>
    <experiments>3</experiments>
</comment>
<comment type="interaction">
    <interactant intactId="EBI-10241353">
        <id>Q3SYF9</id>
    </interactant>
    <interactant intactId="EBI-954089">
        <id>O15273</id>
        <label>TCAP</label>
    </interactant>
    <organismsDiffer>false</organismsDiffer>
    <experiments>3</experiments>
</comment>
<comment type="interaction">
    <interactant intactId="EBI-10241353">
        <id>Q3SYF9</id>
    </interactant>
    <interactant intactId="EBI-11746252">
        <id>Q9NQB0-10</id>
        <label>TCF7L2</label>
    </interactant>
    <organismsDiffer>false</organismsDiffer>
    <experiments>3</experiments>
</comment>
<comment type="interaction">
    <interactant intactId="EBI-10241353">
        <id>Q3SYF9</id>
    </interactant>
    <interactant intactId="EBI-10239812">
        <id>Q96M29</id>
        <label>TEKT5</label>
    </interactant>
    <organismsDiffer>false</organismsDiffer>
    <experiments>3</experiments>
</comment>
<comment type="interaction">
    <interactant intactId="EBI-10241353">
        <id>Q3SYF9</id>
    </interactant>
    <interactant intactId="EBI-11952651">
        <id>Q7Z6R9</id>
        <label>TFAP2D</label>
    </interactant>
    <organismsDiffer>false</organismsDiffer>
    <experiments>3</experiments>
</comment>
<comment type="interaction">
    <interactant intactId="EBI-10241353">
        <id>Q3SYF9</id>
    </interactant>
    <interactant intactId="EBI-11741437">
        <id>Q08117-2</id>
        <label>TLE5</label>
    </interactant>
    <organismsDiffer>false</organismsDiffer>
    <experiments>3</experiments>
</comment>
<comment type="interaction">
    <interactant intactId="EBI-10241353">
        <id>Q3SYF9</id>
    </interactant>
    <interactant intactId="EBI-3939165">
        <id>O43711</id>
        <label>TLX3</label>
    </interactant>
    <organismsDiffer>false</organismsDiffer>
    <experiments>3</experiments>
</comment>
<comment type="interaction">
    <interactant intactId="EBI-10241353">
        <id>Q3SYF9</id>
    </interactant>
    <interactant intactId="EBI-357849">
        <id>Q15025</id>
        <label>TNIP1</label>
    </interactant>
    <organismsDiffer>false</organismsDiffer>
    <experiments>3</experiments>
</comment>
<comment type="interaction">
    <interactant intactId="EBI-10241353">
        <id>Q3SYF9</id>
    </interactant>
    <interactant intactId="EBI-74615">
        <id>Q9H0E2</id>
        <label>TOLLIP</label>
    </interactant>
    <organismsDiffer>false</organismsDiffer>
    <experiments>3</experiments>
</comment>
<comment type="interaction">
    <interactant intactId="EBI-10241353">
        <id>Q3SYF9</id>
    </interactant>
    <interactant intactId="EBI-14115717">
        <id>Q8N7U7-2</id>
        <label>TPRX1</label>
    </interactant>
    <organismsDiffer>false</organismsDiffer>
    <experiments>3</experiments>
</comment>
<comment type="interaction">
    <interactant intactId="EBI-10241353">
        <id>Q3SYF9</id>
    </interactant>
    <interactant intactId="EBI-2107455">
        <id>Q08AM6</id>
        <label>VAC14</label>
    </interactant>
    <organismsDiffer>false</organismsDiffer>
    <experiments>6</experiments>
</comment>
<comment type="interaction">
    <interactant intactId="EBI-10241353">
        <id>Q3SYF9</id>
    </interactant>
    <interactant intactId="EBI-10191303">
        <id>O95231</id>
        <label>VENTX</label>
    </interactant>
    <organismsDiffer>false</organismsDiffer>
    <experiments>3</experiments>
</comment>
<comment type="interaction">
    <interactant intactId="EBI-10241353">
        <id>Q3SYF9</id>
    </interactant>
    <interactant intactId="EBI-11957216">
        <id>A8MV65-2</id>
        <label>VGLL3</label>
    </interactant>
    <organismsDiffer>false</organismsDiffer>
    <experiments>3</experiments>
</comment>
<comment type="interaction">
    <interactant intactId="EBI-10241353">
        <id>Q3SYF9</id>
    </interactant>
    <interactant intactId="EBI-2559305">
        <id>A5D8V6</id>
        <label>VPS37C</label>
    </interactant>
    <organismsDiffer>false</organismsDiffer>
    <experiments>3</experiments>
</comment>
<comment type="interaction">
    <interactant intactId="EBI-10241353">
        <id>Q3SYF9</id>
    </interactant>
    <interactant intactId="EBI-720609">
        <id>O76024</id>
        <label>WFS1</label>
    </interactant>
    <organismsDiffer>false</organismsDiffer>
    <experiments>3</experiments>
</comment>
<comment type="interaction">
    <interactant intactId="EBI-10241353">
        <id>Q3SYF9</id>
    </interactant>
    <interactant intactId="EBI-11963196">
        <id>Q15915</id>
        <label>ZIC1</label>
    </interactant>
    <organismsDiffer>false</organismsDiffer>
    <experiments>3</experiments>
</comment>
<comment type="similarity">
    <text evidence="2">Belongs to the KRTAP type 19 family.</text>
</comment>
<proteinExistence type="evidence at protein level"/>
<accession>Q3SYF9</accession>
<accession>Q08EP7</accession>
<name>KR197_HUMAN</name>
<keyword id="KW-0416">Keratin</keyword>
<keyword id="KW-1185">Reference proteome</keyword>
<keyword id="KW-0677">Repeat</keyword>
<evidence type="ECO:0000250" key="1"/>
<evidence type="ECO:0000305" key="2"/>
<protein>
    <recommendedName>
        <fullName>Keratin-associated protein 19-7</fullName>
    </recommendedName>
</protein>
<dbReference type="EMBL" id="AB096949">
    <property type="protein sequence ID" value="BAE46364.1"/>
    <property type="molecule type" value="mRNA"/>
</dbReference>
<dbReference type="EMBL" id="BC103836">
    <property type="protein sequence ID" value="AAI03837.1"/>
    <property type="molecule type" value="mRNA"/>
</dbReference>
<dbReference type="EMBL" id="BC103837">
    <property type="protein sequence ID" value="AAI03838.1"/>
    <property type="molecule type" value="mRNA"/>
</dbReference>
<dbReference type="EMBL" id="BC103838">
    <property type="protein sequence ID" value="AAI03839.1"/>
    <property type="molecule type" value="mRNA"/>
</dbReference>
<dbReference type="CCDS" id="CCDS13599.1"/>
<dbReference type="RefSeq" id="NP_853645.1">
    <property type="nucleotide sequence ID" value="NM_181614.3"/>
</dbReference>
<dbReference type="BioGRID" id="130657">
    <property type="interactions" value="116"/>
</dbReference>
<dbReference type="FunCoup" id="Q3SYF9">
    <property type="interactions" value="29"/>
</dbReference>
<dbReference type="IntAct" id="Q3SYF9">
    <property type="interactions" value="124"/>
</dbReference>
<dbReference type="STRING" id="9606.ENSP00000334696"/>
<dbReference type="iPTMnet" id="Q3SYF9"/>
<dbReference type="PhosphoSitePlus" id="Q3SYF9"/>
<dbReference type="BioMuta" id="KRTAP19-7"/>
<dbReference type="DMDM" id="88909173"/>
<dbReference type="MassIVE" id="Q3SYF9"/>
<dbReference type="PaxDb" id="9606-ENSP00000334696"/>
<dbReference type="PeptideAtlas" id="Q3SYF9"/>
<dbReference type="ProteomicsDB" id="61860"/>
<dbReference type="DNASU" id="337974"/>
<dbReference type="Ensembl" id="ENST00000334849.2">
    <property type="protein sequence ID" value="ENSP00000334696.2"/>
    <property type="gene ID" value="ENSG00000244362.3"/>
</dbReference>
<dbReference type="GeneID" id="337974"/>
<dbReference type="KEGG" id="hsa:337974"/>
<dbReference type="MANE-Select" id="ENST00000334849.2">
    <property type="protein sequence ID" value="ENSP00000334696.2"/>
    <property type="RefSeq nucleotide sequence ID" value="NM_181614.3"/>
    <property type="RefSeq protein sequence ID" value="NP_853645.1"/>
</dbReference>
<dbReference type="UCSC" id="uc011adb.3">
    <property type="organism name" value="human"/>
</dbReference>
<dbReference type="AGR" id="HGNC:18942"/>
<dbReference type="CTD" id="337974"/>
<dbReference type="GeneCards" id="KRTAP19-7"/>
<dbReference type="HGNC" id="HGNC:18942">
    <property type="gene designation" value="KRTAP19-7"/>
</dbReference>
<dbReference type="HPA" id="ENSG00000244362">
    <property type="expression patterns" value="Not detected"/>
</dbReference>
<dbReference type="neXtProt" id="NX_Q3SYF9"/>
<dbReference type="PharmGKB" id="PA134868084"/>
<dbReference type="VEuPathDB" id="HostDB:ENSG00000244362"/>
<dbReference type="eggNOG" id="ENOG502THDW">
    <property type="taxonomic scope" value="Eukaryota"/>
</dbReference>
<dbReference type="GeneTree" id="ENSGT00950000183791"/>
<dbReference type="InParanoid" id="Q3SYF9"/>
<dbReference type="OMA" id="YGRYCSS"/>
<dbReference type="PAN-GO" id="Q3SYF9">
    <property type="GO annotations" value="0 GO annotations based on evolutionary models"/>
</dbReference>
<dbReference type="PathwayCommons" id="Q3SYF9"/>
<dbReference type="Reactome" id="R-HSA-6805567">
    <property type="pathway name" value="Keratinization"/>
</dbReference>
<dbReference type="SignaLink" id="Q3SYF9"/>
<dbReference type="BioGRID-ORCS" id="337974">
    <property type="hits" value="33 hits in 1066 CRISPR screens"/>
</dbReference>
<dbReference type="GenomeRNAi" id="337974"/>
<dbReference type="Pharos" id="Q3SYF9">
    <property type="development level" value="Tdark"/>
</dbReference>
<dbReference type="PRO" id="PR:Q3SYF9"/>
<dbReference type="Proteomes" id="UP000005640">
    <property type="component" value="Chromosome 21"/>
</dbReference>
<dbReference type="RNAct" id="Q3SYF9">
    <property type="molecule type" value="protein"/>
</dbReference>
<dbReference type="Bgee" id="ENSG00000244362">
    <property type="expression patterns" value="Expressed in male germ line stem cell (sensu Vertebrata) in testis and 9 other cell types or tissues"/>
</dbReference>
<dbReference type="GO" id="GO:0005829">
    <property type="term" value="C:cytosol"/>
    <property type="evidence" value="ECO:0000304"/>
    <property type="project" value="Reactome"/>
</dbReference>
<dbReference type="GO" id="GO:0005882">
    <property type="term" value="C:intermediate filament"/>
    <property type="evidence" value="ECO:0007669"/>
    <property type="project" value="UniProtKB-KW"/>
</dbReference>
<dbReference type="InterPro" id="IPR021743">
    <property type="entry name" value="KRTAP_type8/19/20/21/22"/>
</dbReference>
<dbReference type="InterPro" id="IPR051528">
    <property type="entry name" value="KRTAP_type_19"/>
</dbReference>
<dbReference type="PANTHER" id="PTHR38140">
    <property type="entry name" value="KERATIN-ASSOCIATED PROTEIN 19-3-RELATED"/>
    <property type="match status" value="1"/>
</dbReference>
<dbReference type="PANTHER" id="PTHR38140:SF7">
    <property type="entry name" value="KERATIN-ASSOCIATED PROTEIN 19-7"/>
    <property type="match status" value="1"/>
</dbReference>
<dbReference type="Pfam" id="PF11759">
    <property type="entry name" value="KRTAP"/>
    <property type="match status" value="1"/>
</dbReference>
<reference key="1">
    <citation type="submission" date="2002-11" db="EMBL/GenBank/DDBJ databases">
        <title>Identification of complete keratin-associated protein (KAP) gene cluster spanning 800 kb region on human chromosome 21q22.11.</title>
        <authorList>
            <person name="Obayashi I."/>
            <person name="Shibuya K."/>
            <person name="Minoshima S."/>
            <person name="Kudoh J."/>
            <person name="Shimizu N."/>
        </authorList>
    </citation>
    <scope>NUCLEOTIDE SEQUENCE [MRNA]</scope>
    <source>
        <tissue>Hair root</tissue>
    </source>
</reference>
<reference key="2">
    <citation type="journal article" date="2004" name="Genome Res.">
        <title>The status, quality, and expansion of the NIH full-length cDNA project: the Mammalian Gene Collection (MGC).</title>
        <authorList>
            <consortium name="The MGC Project Team"/>
        </authorList>
    </citation>
    <scope>NUCLEOTIDE SEQUENCE [LARGE SCALE MRNA]</scope>
</reference>
<sequence>MSYSGSYYGGLGYGCGGFGGLGYGYSCGCGSFRRLGYGCGYGGYRYSCCHPSCYGGYWSSGFY</sequence>
<organism>
    <name type="scientific">Homo sapiens</name>
    <name type="common">Human</name>
    <dbReference type="NCBI Taxonomy" id="9606"/>
    <lineage>
        <taxon>Eukaryota</taxon>
        <taxon>Metazoa</taxon>
        <taxon>Chordata</taxon>
        <taxon>Craniata</taxon>
        <taxon>Vertebrata</taxon>
        <taxon>Euteleostomi</taxon>
        <taxon>Mammalia</taxon>
        <taxon>Eutheria</taxon>
        <taxon>Euarchontoglires</taxon>
        <taxon>Primates</taxon>
        <taxon>Haplorrhini</taxon>
        <taxon>Catarrhini</taxon>
        <taxon>Hominidae</taxon>
        <taxon>Homo</taxon>
    </lineage>
</organism>